<comment type="function">
    <text evidence="1">Catalyzes the facilitated diffusion of 2-acyl-glycero-3-phosphoethanolamine (2-acyl-GPE) into the cell.</text>
</comment>
<comment type="subcellular location">
    <subcellularLocation>
        <location evidence="1">Cell inner membrane</location>
        <topology evidence="1">Multi-pass membrane protein</topology>
    </subcellularLocation>
</comment>
<comment type="similarity">
    <text evidence="1">Belongs to the major facilitator superfamily. LplT (TC 2.A.1.42) family.</text>
</comment>
<name>LPLT_SHIBS</name>
<gene>
    <name evidence="1" type="primary">lplT</name>
    <name type="ordered locus">SBO_2727</name>
</gene>
<organism>
    <name type="scientific">Shigella boydii serotype 4 (strain Sb227)</name>
    <dbReference type="NCBI Taxonomy" id="300268"/>
    <lineage>
        <taxon>Bacteria</taxon>
        <taxon>Pseudomonadati</taxon>
        <taxon>Pseudomonadota</taxon>
        <taxon>Gammaproteobacteria</taxon>
        <taxon>Enterobacterales</taxon>
        <taxon>Enterobacteriaceae</taxon>
        <taxon>Shigella</taxon>
    </lineage>
</organism>
<dbReference type="EMBL" id="CP000036">
    <property type="protein sequence ID" value="ABB67256.1"/>
    <property type="molecule type" value="Genomic_DNA"/>
</dbReference>
<dbReference type="RefSeq" id="WP_000004622.1">
    <property type="nucleotide sequence ID" value="NC_007613.1"/>
</dbReference>
<dbReference type="SMR" id="Q31XF2"/>
<dbReference type="KEGG" id="sbo:SBO_2727"/>
<dbReference type="HOGENOM" id="CLU_047399_0_0_6"/>
<dbReference type="Proteomes" id="UP000007067">
    <property type="component" value="Chromosome"/>
</dbReference>
<dbReference type="GO" id="GO:0005886">
    <property type="term" value="C:plasma membrane"/>
    <property type="evidence" value="ECO:0007669"/>
    <property type="project" value="UniProtKB-SubCell"/>
</dbReference>
<dbReference type="GO" id="GO:0051978">
    <property type="term" value="F:lysophospholipid:sodium symporter activity"/>
    <property type="evidence" value="ECO:0007669"/>
    <property type="project" value="InterPro"/>
</dbReference>
<dbReference type="CDD" id="cd06173">
    <property type="entry name" value="MFS_MefA_like"/>
    <property type="match status" value="1"/>
</dbReference>
<dbReference type="FunFam" id="1.20.1250.20:FF:000091">
    <property type="entry name" value="Lysophospholipid transporter LplT"/>
    <property type="match status" value="1"/>
</dbReference>
<dbReference type="Gene3D" id="1.20.1250.20">
    <property type="entry name" value="MFS general substrate transporter like domains"/>
    <property type="match status" value="1"/>
</dbReference>
<dbReference type="HAMAP" id="MF_01585">
    <property type="entry name" value="MFS_LplT"/>
    <property type="match status" value="1"/>
</dbReference>
<dbReference type="InterPro" id="IPR023727">
    <property type="entry name" value="LysoPLipid__transptr_LplT"/>
</dbReference>
<dbReference type="InterPro" id="IPR011701">
    <property type="entry name" value="MFS"/>
</dbReference>
<dbReference type="InterPro" id="IPR036259">
    <property type="entry name" value="MFS_trans_sf"/>
</dbReference>
<dbReference type="NCBIfam" id="NF008397">
    <property type="entry name" value="PRK11195.1"/>
    <property type="match status" value="1"/>
</dbReference>
<dbReference type="PANTHER" id="PTHR43266">
    <property type="entry name" value="MACROLIDE-EFFLUX PROTEIN"/>
    <property type="match status" value="1"/>
</dbReference>
<dbReference type="PANTHER" id="PTHR43266:SF2">
    <property type="entry name" value="MAJOR FACILITATOR SUPERFAMILY (MFS) PROFILE DOMAIN-CONTAINING PROTEIN"/>
    <property type="match status" value="1"/>
</dbReference>
<dbReference type="Pfam" id="PF07690">
    <property type="entry name" value="MFS_1"/>
    <property type="match status" value="1"/>
</dbReference>
<dbReference type="SUPFAM" id="SSF103473">
    <property type="entry name" value="MFS general substrate transporter"/>
    <property type="match status" value="1"/>
</dbReference>
<feature type="chain" id="PRO_0000309834" description="Lysophospholipid transporter LplT">
    <location>
        <begin position="1"/>
        <end position="397"/>
    </location>
</feature>
<feature type="topological domain" description="Periplasmic" evidence="1">
    <location>
        <begin position="1"/>
        <end position="17"/>
    </location>
</feature>
<feature type="transmembrane region" description="Helical" evidence="1">
    <location>
        <begin position="18"/>
        <end position="38"/>
    </location>
</feature>
<feature type="topological domain" description="Cytoplasmic" evidence="1">
    <location>
        <begin position="39"/>
        <end position="52"/>
    </location>
</feature>
<feature type="transmembrane region" description="Helical" evidence="1">
    <location>
        <begin position="53"/>
        <end position="73"/>
    </location>
</feature>
<feature type="topological domain" description="Periplasmic" evidence="1">
    <location>
        <begin position="74"/>
        <end position="90"/>
    </location>
</feature>
<feature type="transmembrane region" description="Helical" evidence="1">
    <location>
        <begin position="91"/>
        <end position="111"/>
    </location>
</feature>
<feature type="topological domain" description="Cytoplasmic" evidence="1">
    <location>
        <begin position="112"/>
        <end position="144"/>
    </location>
</feature>
<feature type="transmembrane region" description="Helical" evidence="1">
    <location>
        <begin position="145"/>
        <end position="165"/>
    </location>
</feature>
<feature type="topological domain" description="Periplasmic" evidence="1">
    <location>
        <position position="166"/>
    </location>
</feature>
<feature type="transmembrane region" description="Helical" evidence="1">
    <location>
        <begin position="167"/>
        <end position="187"/>
    </location>
</feature>
<feature type="topological domain" description="Cytoplasmic" evidence="1">
    <location>
        <begin position="188"/>
        <end position="226"/>
    </location>
</feature>
<feature type="transmembrane region" description="Helical" evidence="1">
    <location>
        <begin position="227"/>
        <end position="247"/>
    </location>
</feature>
<feature type="topological domain" description="Periplasmic" evidence="1">
    <location>
        <begin position="248"/>
        <end position="256"/>
    </location>
</feature>
<feature type="transmembrane region" description="Helical" evidence="1">
    <location>
        <begin position="257"/>
        <end position="277"/>
    </location>
</feature>
<feature type="topological domain" description="Cytoplasmic" evidence="1">
    <location>
        <begin position="278"/>
        <end position="280"/>
    </location>
</feature>
<feature type="transmembrane region" description="Helical" evidence="1">
    <location>
        <begin position="281"/>
        <end position="301"/>
    </location>
</feature>
<feature type="topological domain" description="Periplasmic" evidence="1">
    <location>
        <begin position="302"/>
        <end position="304"/>
    </location>
</feature>
<feature type="transmembrane region" description="Helical" evidence="1">
    <location>
        <begin position="305"/>
        <end position="325"/>
    </location>
</feature>
<feature type="topological domain" description="Cytoplasmic" evidence="1">
    <location>
        <begin position="326"/>
        <end position="343"/>
    </location>
</feature>
<feature type="transmembrane region" description="Helical" evidence="1">
    <location>
        <begin position="344"/>
        <end position="364"/>
    </location>
</feature>
<feature type="topological domain" description="Periplasmic" evidence="1">
    <location>
        <begin position="365"/>
        <end position="366"/>
    </location>
</feature>
<feature type="transmembrane region" description="Helical" evidence="1">
    <location>
        <begin position="367"/>
        <end position="387"/>
    </location>
</feature>
<feature type="topological domain" description="Cytoplasmic" evidence="1">
    <location>
        <begin position="388"/>
        <end position="397"/>
    </location>
</feature>
<keyword id="KW-0997">Cell inner membrane</keyword>
<keyword id="KW-1003">Cell membrane</keyword>
<keyword id="KW-0445">Lipid transport</keyword>
<keyword id="KW-0472">Membrane</keyword>
<keyword id="KW-0812">Transmembrane</keyword>
<keyword id="KW-1133">Transmembrane helix</keyword>
<keyword id="KW-0813">Transport</keyword>
<accession>Q31XF2</accession>
<proteinExistence type="inferred from homology"/>
<evidence type="ECO:0000255" key="1">
    <source>
        <dbReference type="HAMAP-Rule" id="MF_01585"/>
    </source>
</evidence>
<protein>
    <recommendedName>
        <fullName evidence="1">Lysophospholipid transporter LplT</fullName>
    </recommendedName>
</protein>
<sequence>MSESVHTNTSLWSKGMKAVIVAQFLSAFGDNALLFATLALLKAQFYPEWSQPILQMVFVGAYILFAPFVGQVADSFAKGRVMMFANGLKLLGAASICFGINPFLGYTLVGVGAAAYSPAKYGILGELTTGSKLVKANGLMEASTIAAILLGSVAGGVLADWHVLVALAACALAYGGAVVANIYIPKLAAARPGQSWNLINMTRSFLNACTSLWRNGETRFSLVGTSLFWGAGVTLRFLLVLWVPVALGITDNSTPTYLNAMVAIGIVVGAGAAAKLVTLETVSRCMPAGILIGVVVLIFSLQHELLPAYALLMLIGVMGGFFVVPLNALLQERGKKSVGAGNAIAVQNLGENSAMLLMLGIYSLAVMVGIPVVPIGIGFGALFALAITALWIWQRRH</sequence>
<reference key="1">
    <citation type="journal article" date="2005" name="Nucleic Acids Res.">
        <title>Genome dynamics and diversity of Shigella species, the etiologic agents of bacillary dysentery.</title>
        <authorList>
            <person name="Yang F."/>
            <person name="Yang J."/>
            <person name="Zhang X."/>
            <person name="Chen L."/>
            <person name="Jiang Y."/>
            <person name="Yan Y."/>
            <person name="Tang X."/>
            <person name="Wang J."/>
            <person name="Xiong Z."/>
            <person name="Dong J."/>
            <person name="Xue Y."/>
            <person name="Zhu Y."/>
            <person name="Xu X."/>
            <person name="Sun L."/>
            <person name="Chen S."/>
            <person name="Nie H."/>
            <person name="Peng J."/>
            <person name="Xu J."/>
            <person name="Wang Y."/>
            <person name="Yuan Z."/>
            <person name="Wen Y."/>
            <person name="Yao Z."/>
            <person name="Shen Y."/>
            <person name="Qiang B."/>
            <person name="Hou Y."/>
            <person name="Yu J."/>
            <person name="Jin Q."/>
        </authorList>
    </citation>
    <scope>NUCLEOTIDE SEQUENCE [LARGE SCALE GENOMIC DNA]</scope>
    <source>
        <strain>Sb227</strain>
    </source>
</reference>